<protein>
    <recommendedName>
        <fullName>Uncharacterized protein YnzH</fullName>
    </recommendedName>
</protein>
<comment type="interaction">
    <interactant intactId="EBI-6470838">
        <id>O31802</id>
    </interactant>
    <interactant intactId="EBI-6401480">
        <id>P07790</id>
        <label>cotC</label>
    </interactant>
    <organismsDiffer>false</organismsDiffer>
    <experiments>3</experiments>
</comment>
<comment type="similarity">
    <text evidence="1">To B.subtilis spore coat protein C.</text>
</comment>
<evidence type="ECO:0000305" key="1"/>
<accession>O31802</accession>
<sequence length="86" mass="11562">MGYYKKYKEEYYTWKKTYYKKYYDNDKKHYDCDKYYDHDKKHYDYDKKYDDHDKKYYDDHDYHYEKKYYDDDDHYYDFVESYKKHH</sequence>
<organism>
    <name type="scientific">Bacillus subtilis (strain 168)</name>
    <dbReference type="NCBI Taxonomy" id="224308"/>
    <lineage>
        <taxon>Bacteria</taxon>
        <taxon>Bacillati</taxon>
        <taxon>Bacillota</taxon>
        <taxon>Bacilli</taxon>
        <taxon>Bacillales</taxon>
        <taxon>Bacillaceae</taxon>
        <taxon>Bacillus</taxon>
    </lineage>
</organism>
<proteinExistence type="evidence at protein level"/>
<gene>
    <name type="primary">ynzH</name>
    <name type="ordered locus">BSU17670</name>
</gene>
<reference key="1">
    <citation type="journal article" date="1997" name="Nature">
        <title>The complete genome sequence of the Gram-positive bacterium Bacillus subtilis.</title>
        <authorList>
            <person name="Kunst F."/>
            <person name="Ogasawara N."/>
            <person name="Moszer I."/>
            <person name="Albertini A.M."/>
            <person name="Alloni G."/>
            <person name="Azevedo V."/>
            <person name="Bertero M.G."/>
            <person name="Bessieres P."/>
            <person name="Bolotin A."/>
            <person name="Borchert S."/>
            <person name="Borriss R."/>
            <person name="Boursier L."/>
            <person name="Brans A."/>
            <person name="Braun M."/>
            <person name="Brignell S.C."/>
            <person name="Bron S."/>
            <person name="Brouillet S."/>
            <person name="Bruschi C.V."/>
            <person name="Caldwell B."/>
            <person name="Capuano V."/>
            <person name="Carter N.M."/>
            <person name="Choi S.-K."/>
            <person name="Codani J.-J."/>
            <person name="Connerton I.F."/>
            <person name="Cummings N.J."/>
            <person name="Daniel R.A."/>
            <person name="Denizot F."/>
            <person name="Devine K.M."/>
            <person name="Duesterhoeft A."/>
            <person name="Ehrlich S.D."/>
            <person name="Emmerson P.T."/>
            <person name="Entian K.-D."/>
            <person name="Errington J."/>
            <person name="Fabret C."/>
            <person name="Ferrari E."/>
            <person name="Foulger D."/>
            <person name="Fritz C."/>
            <person name="Fujita M."/>
            <person name="Fujita Y."/>
            <person name="Fuma S."/>
            <person name="Galizzi A."/>
            <person name="Galleron N."/>
            <person name="Ghim S.-Y."/>
            <person name="Glaser P."/>
            <person name="Goffeau A."/>
            <person name="Golightly E.J."/>
            <person name="Grandi G."/>
            <person name="Guiseppi G."/>
            <person name="Guy B.J."/>
            <person name="Haga K."/>
            <person name="Haiech J."/>
            <person name="Harwood C.R."/>
            <person name="Henaut A."/>
            <person name="Hilbert H."/>
            <person name="Holsappel S."/>
            <person name="Hosono S."/>
            <person name="Hullo M.-F."/>
            <person name="Itaya M."/>
            <person name="Jones L.-M."/>
            <person name="Joris B."/>
            <person name="Karamata D."/>
            <person name="Kasahara Y."/>
            <person name="Klaerr-Blanchard M."/>
            <person name="Klein C."/>
            <person name="Kobayashi Y."/>
            <person name="Koetter P."/>
            <person name="Koningstein G."/>
            <person name="Krogh S."/>
            <person name="Kumano M."/>
            <person name="Kurita K."/>
            <person name="Lapidus A."/>
            <person name="Lardinois S."/>
            <person name="Lauber J."/>
            <person name="Lazarevic V."/>
            <person name="Lee S.-M."/>
            <person name="Levine A."/>
            <person name="Liu H."/>
            <person name="Masuda S."/>
            <person name="Mauel C."/>
            <person name="Medigue C."/>
            <person name="Medina N."/>
            <person name="Mellado R.P."/>
            <person name="Mizuno M."/>
            <person name="Moestl D."/>
            <person name="Nakai S."/>
            <person name="Noback M."/>
            <person name="Noone D."/>
            <person name="O'Reilly M."/>
            <person name="Ogawa K."/>
            <person name="Ogiwara A."/>
            <person name="Oudega B."/>
            <person name="Park S.-H."/>
            <person name="Parro V."/>
            <person name="Pohl T.M."/>
            <person name="Portetelle D."/>
            <person name="Porwollik S."/>
            <person name="Prescott A.M."/>
            <person name="Presecan E."/>
            <person name="Pujic P."/>
            <person name="Purnelle B."/>
            <person name="Rapoport G."/>
            <person name="Rey M."/>
            <person name="Reynolds S."/>
            <person name="Rieger M."/>
            <person name="Rivolta C."/>
            <person name="Rocha E."/>
            <person name="Roche B."/>
            <person name="Rose M."/>
            <person name="Sadaie Y."/>
            <person name="Sato T."/>
            <person name="Scanlan E."/>
            <person name="Schleich S."/>
            <person name="Schroeter R."/>
            <person name="Scoffone F."/>
            <person name="Sekiguchi J."/>
            <person name="Sekowska A."/>
            <person name="Seror S.J."/>
            <person name="Serror P."/>
            <person name="Shin B.-S."/>
            <person name="Soldo B."/>
            <person name="Sorokin A."/>
            <person name="Tacconi E."/>
            <person name="Takagi T."/>
            <person name="Takahashi H."/>
            <person name="Takemaru K."/>
            <person name="Takeuchi M."/>
            <person name="Tamakoshi A."/>
            <person name="Tanaka T."/>
            <person name="Terpstra P."/>
            <person name="Tognoni A."/>
            <person name="Tosato V."/>
            <person name="Uchiyama S."/>
            <person name="Vandenbol M."/>
            <person name="Vannier F."/>
            <person name="Vassarotti A."/>
            <person name="Viari A."/>
            <person name="Wambutt R."/>
            <person name="Wedler E."/>
            <person name="Wedler H."/>
            <person name="Weitzenegger T."/>
            <person name="Winters P."/>
            <person name="Wipat A."/>
            <person name="Yamamoto H."/>
            <person name="Yamane K."/>
            <person name="Yasumoto K."/>
            <person name="Yata K."/>
            <person name="Yoshida K."/>
            <person name="Yoshikawa H.-F."/>
            <person name="Zumstein E."/>
            <person name="Yoshikawa H."/>
            <person name="Danchin A."/>
        </authorList>
    </citation>
    <scope>NUCLEOTIDE SEQUENCE [LARGE SCALE GENOMIC DNA]</scope>
    <source>
        <strain>168</strain>
    </source>
</reference>
<dbReference type="EMBL" id="AL009126">
    <property type="protein sequence ID" value="CAB13651.1"/>
    <property type="molecule type" value="Genomic_DNA"/>
</dbReference>
<dbReference type="PIR" id="B69895">
    <property type="entry name" value="B69895"/>
</dbReference>
<dbReference type="FunCoup" id="O31802">
    <property type="interactions" value="6"/>
</dbReference>
<dbReference type="IntAct" id="O31802">
    <property type="interactions" value="2"/>
</dbReference>
<dbReference type="STRING" id="224308.BSU17670"/>
<dbReference type="PaxDb" id="224308-BSU17670"/>
<dbReference type="EnsemblBacteria" id="CAB13651">
    <property type="protein sequence ID" value="CAB13651"/>
    <property type="gene ID" value="BSU_17670"/>
</dbReference>
<dbReference type="GeneID" id="939580"/>
<dbReference type="KEGG" id="bsu:BSU17670"/>
<dbReference type="PATRIC" id="fig|224308.179.peg.1919"/>
<dbReference type="InParanoid" id="O31802"/>
<dbReference type="BioCyc" id="BSUB:BSU17670-MONOMER"/>
<dbReference type="Proteomes" id="UP000001570">
    <property type="component" value="Chromosome"/>
</dbReference>
<feature type="chain" id="PRO_0000049651" description="Uncharacterized protein YnzH">
    <location>
        <begin position="1"/>
        <end position="86"/>
    </location>
</feature>
<keyword id="KW-1185">Reference proteome</keyword>
<name>YNZH_BACSU</name>